<comment type="function">
    <text evidence="1">Plasma membrane sugar-proton symporter.</text>
</comment>
<comment type="subcellular location">
    <subcellularLocation>
        <location evidence="1">Membrane</location>
        <topology evidence="1">Multi-pass membrane protein</topology>
    </subcellularLocation>
</comment>
<comment type="similarity">
    <text evidence="3">Belongs to the major facilitator superfamily. Sugar transporter (TC 2.A.1.1) family.</text>
</comment>
<comment type="sequence caution" evidence="3">
    <conflict type="erroneous initiation">
        <sequence resource="EMBL-CDS" id="BAC42720"/>
    </conflict>
</comment>
<evidence type="ECO:0000250" key="1"/>
<evidence type="ECO:0000255" key="2"/>
<evidence type="ECO:0000305" key="3"/>
<protein>
    <recommendedName>
        <fullName>Probable polyol transporter 6</fullName>
    </recommendedName>
</protein>
<organism>
    <name type="scientific">Arabidopsis thaliana</name>
    <name type="common">Mouse-ear cress</name>
    <dbReference type="NCBI Taxonomy" id="3702"/>
    <lineage>
        <taxon>Eukaryota</taxon>
        <taxon>Viridiplantae</taxon>
        <taxon>Streptophyta</taxon>
        <taxon>Embryophyta</taxon>
        <taxon>Tracheophyta</taxon>
        <taxon>Spermatophyta</taxon>
        <taxon>Magnoliopsida</taxon>
        <taxon>eudicotyledons</taxon>
        <taxon>Gunneridae</taxon>
        <taxon>Pentapetalae</taxon>
        <taxon>rosids</taxon>
        <taxon>malvids</taxon>
        <taxon>Brassicales</taxon>
        <taxon>Brassicaceae</taxon>
        <taxon>Camelineae</taxon>
        <taxon>Arabidopsis</taxon>
    </lineage>
</organism>
<sequence length="493" mass="52923">MADQISGEKPAGVNRFALQCAIVASIVSIIFGYDTGVMSGAMVFIEEDLKTNDVQIEVLTGILNLCALVGSLLAGRTSDIIGRRYTIVLASILFMLGSILMGWGPNYPVLLSGRCTAGLGVGFALMVAPVYSAEIATASHRGLLASLPHLCISIGILLGYIVNYFFSKLPMHIGWRLMLGIAAVPSLVLAFGILKMPESPRWLIMQGRLKEGKEILELVSNSPEEAELRFQDIKAAAGIDPKCVDDVVKMEGKKTHGEGVWKELILRPTPAVRRVLLTALGIHFFQHASGIEAVLLYGPRIFKKAGITTKDKLFLVTIGVGIMKTTFIFTATLLLDKVGRRKLLLTSVGGMVIALTMLGFGLTMAQNAGGKLAWALVLSIVAAYSFVAFFSIGLGPITWVYSSEVFPLKLRAQGASLGVAVNRVMNATVSMSFLSLTSAITTGGAFFMFAGVAAVAWNFFFFLLPETKGKSLEEIEALFQRDGDKVRGENGAA</sequence>
<dbReference type="EMBL" id="Z99708">
    <property type="protein sequence ID" value="CAB16808.1"/>
    <property type="molecule type" value="Genomic_DNA"/>
</dbReference>
<dbReference type="EMBL" id="AL161589">
    <property type="protein sequence ID" value="CAB80333.1"/>
    <property type="molecule type" value="Genomic_DNA"/>
</dbReference>
<dbReference type="EMBL" id="CP002687">
    <property type="protein sequence ID" value="AEE86685.1"/>
    <property type="molecule type" value="Genomic_DNA"/>
</dbReference>
<dbReference type="EMBL" id="AK118092">
    <property type="protein sequence ID" value="BAC42720.1"/>
    <property type="status" value="ALT_INIT"/>
    <property type="molecule type" value="mRNA"/>
</dbReference>
<dbReference type="PIR" id="A85433">
    <property type="entry name" value="A85433"/>
</dbReference>
<dbReference type="RefSeq" id="NP_195385.1">
    <property type="nucleotide sequence ID" value="NM_119831.3"/>
</dbReference>
<dbReference type="SMR" id="Q8GXR2"/>
<dbReference type="STRING" id="3702.Q8GXR2"/>
<dbReference type="PaxDb" id="3702-AT4G36670.1"/>
<dbReference type="ProteomicsDB" id="234773"/>
<dbReference type="EnsemblPlants" id="AT4G36670.1">
    <property type="protein sequence ID" value="AT4G36670.1"/>
    <property type="gene ID" value="AT4G36670"/>
</dbReference>
<dbReference type="GeneID" id="829820"/>
<dbReference type="Gramene" id="AT4G36670.1">
    <property type="protein sequence ID" value="AT4G36670.1"/>
    <property type="gene ID" value="AT4G36670"/>
</dbReference>
<dbReference type="KEGG" id="ath:AT4G36670"/>
<dbReference type="Araport" id="AT4G36670"/>
<dbReference type="TAIR" id="AT4G36670">
    <property type="gene designation" value="PMT6"/>
</dbReference>
<dbReference type="eggNOG" id="KOG0254">
    <property type="taxonomic scope" value="Eukaryota"/>
</dbReference>
<dbReference type="HOGENOM" id="CLU_001265_30_5_1"/>
<dbReference type="InParanoid" id="Q8GXR2"/>
<dbReference type="OMA" id="KATWMEC"/>
<dbReference type="PhylomeDB" id="Q8GXR2"/>
<dbReference type="PRO" id="PR:Q8GXR2"/>
<dbReference type="Proteomes" id="UP000006548">
    <property type="component" value="Chromosome 4"/>
</dbReference>
<dbReference type="ExpressionAtlas" id="Q8GXR2">
    <property type="expression patterns" value="baseline and differential"/>
</dbReference>
<dbReference type="GO" id="GO:0016020">
    <property type="term" value="C:membrane"/>
    <property type="evidence" value="ECO:0007669"/>
    <property type="project" value="UniProtKB-SubCell"/>
</dbReference>
<dbReference type="GO" id="GO:0005351">
    <property type="term" value="F:carbohydrate:proton symporter activity"/>
    <property type="evidence" value="ECO:0007669"/>
    <property type="project" value="InterPro"/>
</dbReference>
<dbReference type="CDD" id="cd17437">
    <property type="entry name" value="MFS_PLT"/>
    <property type="match status" value="1"/>
</dbReference>
<dbReference type="FunFam" id="1.20.1250.20:FF:000025">
    <property type="entry name" value="probable polyol transporter 4"/>
    <property type="match status" value="1"/>
</dbReference>
<dbReference type="Gene3D" id="1.20.1250.20">
    <property type="entry name" value="MFS general substrate transporter like domains"/>
    <property type="match status" value="1"/>
</dbReference>
<dbReference type="InterPro" id="IPR020846">
    <property type="entry name" value="MFS_dom"/>
</dbReference>
<dbReference type="InterPro" id="IPR005828">
    <property type="entry name" value="MFS_sugar_transport-like"/>
</dbReference>
<dbReference type="InterPro" id="IPR036259">
    <property type="entry name" value="MFS_trans_sf"/>
</dbReference>
<dbReference type="InterPro" id="IPR050814">
    <property type="entry name" value="Myo-inositol_Transporter"/>
</dbReference>
<dbReference type="InterPro" id="IPR044776">
    <property type="entry name" value="PLT1-6"/>
</dbReference>
<dbReference type="InterPro" id="IPR003663">
    <property type="entry name" value="Sugar/inositol_transpt"/>
</dbReference>
<dbReference type="InterPro" id="IPR005829">
    <property type="entry name" value="Sugar_transporter_CS"/>
</dbReference>
<dbReference type="NCBIfam" id="TIGR00879">
    <property type="entry name" value="SP"/>
    <property type="match status" value="1"/>
</dbReference>
<dbReference type="PANTHER" id="PTHR48020">
    <property type="entry name" value="PROTON MYO-INOSITOL COTRANSPORTER"/>
    <property type="match status" value="1"/>
</dbReference>
<dbReference type="PANTHER" id="PTHR48020:SF49">
    <property type="entry name" value="SUGAR TRANSPORTER"/>
    <property type="match status" value="1"/>
</dbReference>
<dbReference type="Pfam" id="PF00083">
    <property type="entry name" value="Sugar_tr"/>
    <property type="match status" value="1"/>
</dbReference>
<dbReference type="PRINTS" id="PR00171">
    <property type="entry name" value="SUGRTRNSPORT"/>
</dbReference>
<dbReference type="SUPFAM" id="SSF103473">
    <property type="entry name" value="MFS general substrate transporter"/>
    <property type="match status" value="1"/>
</dbReference>
<dbReference type="PROSITE" id="PS50850">
    <property type="entry name" value="MFS"/>
    <property type="match status" value="1"/>
</dbReference>
<dbReference type="PROSITE" id="PS00216">
    <property type="entry name" value="SUGAR_TRANSPORT_1"/>
    <property type="match status" value="1"/>
</dbReference>
<keyword id="KW-0472">Membrane</keyword>
<keyword id="KW-1185">Reference proteome</keyword>
<keyword id="KW-0762">Sugar transport</keyword>
<keyword id="KW-0769">Symport</keyword>
<keyword id="KW-0812">Transmembrane</keyword>
<keyword id="KW-1133">Transmembrane helix</keyword>
<keyword id="KW-0813">Transport</keyword>
<reference key="1">
    <citation type="journal article" date="1998" name="Nature">
        <title>Analysis of 1.9 Mb of contiguous sequence from chromosome 4 of Arabidopsis thaliana.</title>
        <authorList>
            <person name="Bevan M."/>
            <person name="Bancroft I."/>
            <person name="Bent E."/>
            <person name="Love K."/>
            <person name="Goodman H.M."/>
            <person name="Dean C."/>
            <person name="Bergkamp R."/>
            <person name="Dirkse W."/>
            <person name="van Staveren M."/>
            <person name="Stiekema W."/>
            <person name="Drost L."/>
            <person name="Ridley P."/>
            <person name="Hudson S.-A."/>
            <person name="Patel K."/>
            <person name="Murphy G."/>
            <person name="Piffanelli P."/>
            <person name="Wedler H."/>
            <person name="Wedler E."/>
            <person name="Wambutt R."/>
            <person name="Weitzenegger T."/>
            <person name="Pohl T."/>
            <person name="Terryn N."/>
            <person name="Gielen J."/>
            <person name="Villarroel R."/>
            <person name="De Clercq R."/>
            <person name="van Montagu M."/>
            <person name="Lecharny A."/>
            <person name="Aubourg S."/>
            <person name="Gy I."/>
            <person name="Kreis M."/>
            <person name="Lao N."/>
            <person name="Kavanagh T."/>
            <person name="Hempel S."/>
            <person name="Kotter P."/>
            <person name="Entian K.-D."/>
            <person name="Rieger M."/>
            <person name="Schaefer M."/>
            <person name="Funk B."/>
            <person name="Mueller-Auer S."/>
            <person name="Silvey M."/>
            <person name="James R."/>
            <person name="Monfort A."/>
            <person name="Pons A."/>
            <person name="Puigdomenech P."/>
            <person name="Douka A."/>
            <person name="Voukelatou E."/>
            <person name="Milioni D."/>
            <person name="Hatzopoulos P."/>
            <person name="Piravandi E."/>
            <person name="Obermaier B."/>
            <person name="Hilbert H."/>
            <person name="Duesterhoeft A."/>
            <person name="Moores T."/>
            <person name="Jones J.D.G."/>
            <person name="Eneva T."/>
            <person name="Palme K."/>
            <person name="Benes V."/>
            <person name="Rechmann S."/>
            <person name="Ansorge W."/>
            <person name="Cooke R."/>
            <person name="Berger C."/>
            <person name="Delseny M."/>
            <person name="Voet M."/>
            <person name="Volckaert G."/>
            <person name="Mewes H.-W."/>
            <person name="Klosterman S."/>
            <person name="Schueller C."/>
            <person name="Chalwatzis N."/>
        </authorList>
    </citation>
    <scope>NUCLEOTIDE SEQUENCE [LARGE SCALE GENOMIC DNA]</scope>
    <source>
        <strain>cv. Columbia</strain>
    </source>
</reference>
<reference key="2">
    <citation type="journal article" date="1999" name="Nature">
        <title>Sequence and analysis of chromosome 4 of the plant Arabidopsis thaliana.</title>
        <authorList>
            <person name="Mayer K.F.X."/>
            <person name="Schueller C."/>
            <person name="Wambutt R."/>
            <person name="Murphy G."/>
            <person name="Volckaert G."/>
            <person name="Pohl T."/>
            <person name="Duesterhoeft A."/>
            <person name="Stiekema W."/>
            <person name="Entian K.-D."/>
            <person name="Terryn N."/>
            <person name="Harris B."/>
            <person name="Ansorge W."/>
            <person name="Brandt P."/>
            <person name="Grivell L.A."/>
            <person name="Rieger M."/>
            <person name="Weichselgartner M."/>
            <person name="de Simone V."/>
            <person name="Obermaier B."/>
            <person name="Mache R."/>
            <person name="Mueller M."/>
            <person name="Kreis M."/>
            <person name="Delseny M."/>
            <person name="Puigdomenech P."/>
            <person name="Watson M."/>
            <person name="Schmidtheini T."/>
            <person name="Reichert B."/>
            <person name="Portetelle D."/>
            <person name="Perez-Alonso M."/>
            <person name="Boutry M."/>
            <person name="Bancroft I."/>
            <person name="Vos P."/>
            <person name="Hoheisel J."/>
            <person name="Zimmermann W."/>
            <person name="Wedler H."/>
            <person name="Ridley P."/>
            <person name="Langham S.-A."/>
            <person name="McCullagh B."/>
            <person name="Bilham L."/>
            <person name="Robben J."/>
            <person name="van der Schueren J."/>
            <person name="Grymonprez B."/>
            <person name="Chuang Y.-J."/>
            <person name="Vandenbussche F."/>
            <person name="Braeken M."/>
            <person name="Weltjens I."/>
            <person name="Voet M."/>
            <person name="Bastiaens I."/>
            <person name="Aert R."/>
            <person name="Defoor E."/>
            <person name="Weitzenegger T."/>
            <person name="Bothe G."/>
            <person name="Ramsperger U."/>
            <person name="Hilbert H."/>
            <person name="Braun M."/>
            <person name="Holzer E."/>
            <person name="Brandt A."/>
            <person name="Peters S."/>
            <person name="van Staveren M."/>
            <person name="Dirkse W."/>
            <person name="Mooijman P."/>
            <person name="Klein Lankhorst R."/>
            <person name="Rose M."/>
            <person name="Hauf J."/>
            <person name="Koetter P."/>
            <person name="Berneiser S."/>
            <person name="Hempel S."/>
            <person name="Feldpausch M."/>
            <person name="Lamberth S."/>
            <person name="Van den Daele H."/>
            <person name="De Keyser A."/>
            <person name="Buysshaert C."/>
            <person name="Gielen J."/>
            <person name="Villarroel R."/>
            <person name="De Clercq R."/>
            <person name="van Montagu M."/>
            <person name="Rogers J."/>
            <person name="Cronin A."/>
            <person name="Quail M.A."/>
            <person name="Bray-Allen S."/>
            <person name="Clark L."/>
            <person name="Doggett J."/>
            <person name="Hall S."/>
            <person name="Kay M."/>
            <person name="Lennard N."/>
            <person name="McLay K."/>
            <person name="Mayes R."/>
            <person name="Pettett A."/>
            <person name="Rajandream M.A."/>
            <person name="Lyne M."/>
            <person name="Benes V."/>
            <person name="Rechmann S."/>
            <person name="Borkova D."/>
            <person name="Bloecker H."/>
            <person name="Scharfe M."/>
            <person name="Grimm M."/>
            <person name="Loehnert T.-H."/>
            <person name="Dose S."/>
            <person name="de Haan M."/>
            <person name="Maarse A.C."/>
            <person name="Schaefer M."/>
            <person name="Mueller-Auer S."/>
            <person name="Gabel C."/>
            <person name="Fuchs M."/>
            <person name="Fartmann B."/>
            <person name="Granderath K."/>
            <person name="Dauner D."/>
            <person name="Herzl A."/>
            <person name="Neumann S."/>
            <person name="Argiriou A."/>
            <person name="Vitale D."/>
            <person name="Liguori R."/>
            <person name="Piravandi E."/>
            <person name="Massenet O."/>
            <person name="Quigley F."/>
            <person name="Clabauld G."/>
            <person name="Muendlein A."/>
            <person name="Felber R."/>
            <person name="Schnabl S."/>
            <person name="Hiller R."/>
            <person name="Schmidt W."/>
            <person name="Lecharny A."/>
            <person name="Aubourg S."/>
            <person name="Chefdor F."/>
            <person name="Cooke R."/>
            <person name="Berger C."/>
            <person name="Monfort A."/>
            <person name="Casacuberta E."/>
            <person name="Gibbons T."/>
            <person name="Weber N."/>
            <person name="Vandenbol M."/>
            <person name="Bargues M."/>
            <person name="Terol J."/>
            <person name="Torres A."/>
            <person name="Perez-Perez A."/>
            <person name="Purnelle B."/>
            <person name="Bent E."/>
            <person name="Johnson S."/>
            <person name="Tacon D."/>
            <person name="Jesse T."/>
            <person name="Heijnen L."/>
            <person name="Schwarz S."/>
            <person name="Scholler P."/>
            <person name="Heber S."/>
            <person name="Francs P."/>
            <person name="Bielke C."/>
            <person name="Frishman D."/>
            <person name="Haase D."/>
            <person name="Lemcke K."/>
            <person name="Mewes H.-W."/>
            <person name="Stocker S."/>
            <person name="Zaccaria P."/>
            <person name="Bevan M."/>
            <person name="Wilson R.K."/>
            <person name="de la Bastide M."/>
            <person name="Habermann K."/>
            <person name="Parnell L."/>
            <person name="Dedhia N."/>
            <person name="Gnoj L."/>
            <person name="Schutz K."/>
            <person name="Huang E."/>
            <person name="Spiegel L."/>
            <person name="Sekhon M."/>
            <person name="Murray J."/>
            <person name="Sheet P."/>
            <person name="Cordes M."/>
            <person name="Abu-Threideh J."/>
            <person name="Stoneking T."/>
            <person name="Kalicki J."/>
            <person name="Graves T."/>
            <person name="Harmon G."/>
            <person name="Edwards J."/>
            <person name="Latreille P."/>
            <person name="Courtney L."/>
            <person name="Cloud J."/>
            <person name="Abbott A."/>
            <person name="Scott K."/>
            <person name="Johnson D."/>
            <person name="Minx P."/>
            <person name="Bentley D."/>
            <person name="Fulton B."/>
            <person name="Miller N."/>
            <person name="Greco T."/>
            <person name="Kemp K."/>
            <person name="Kramer J."/>
            <person name="Fulton L."/>
            <person name="Mardis E."/>
            <person name="Dante M."/>
            <person name="Pepin K."/>
            <person name="Hillier L.W."/>
            <person name="Nelson J."/>
            <person name="Spieth J."/>
            <person name="Ryan E."/>
            <person name="Andrews S."/>
            <person name="Geisel C."/>
            <person name="Layman D."/>
            <person name="Du H."/>
            <person name="Ali J."/>
            <person name="Berghoff A."/>
            <person name="Jones K."/>
            <person name="Drone K."/>
            <person name="Cotton M."/>
            <person name="Joshu C."/>
            <person name="Antonoiu B."/>
            <person name="Zidanic M."/>
            <person name="Strong C."/>
            <person name="Sun H."/>
            <person name="Lamar B."/>
            <person name="Yordan C."/>
            <person name="Ma P."/>
            <person name="Zhong J."/>
            <person name="Preston R."/>
            <person name="Vil D."/>
            <person name="Shekher M."/>
            <person name="Matero A."/>
            <person name="Shah R."/>
            <person name="Swaby I.K."/>
            <person name="O'Shaughnessy A."/>
            <person name="Rodriguez M."/>
            <person name="Hoffman J."/>
            <person name="Till S."/>
            <person name="Granat S."/>
            <person name="Shohdy N."/>
            <person name="Hasegawa A."/>
            <person name="Hameed A."/>
            <person name="Lodhi M."/>
            <person name="Johnson A."/>
            <person name="Chen E."/>
            <person name="Marra M.A."/>
            <person name="Martienssen R."/>
            <person name="McCombie W.R."/>
        </authorList>
    </citation>
    <scope>NUCLEOTIDE SEQUENCE [LARGE SCALE GENOMIC DNA]</scope>
    <source>
        <strain>cv. Columbia</strain>
    </source>
</reference>
<reference key="3">
    <citation type="journal article" date="2017" name="Plant J.">
        <title>Araport11: a complete reannotation of the Arabidopsis thaliana reference genome.</title>
        <authorList>
            <person name="Cheng C.Y."/>
            <person name="Krishnakumar V."/>
            <person name="Chan A.P."/>
            <person name="Thibaud-Nissen F."/>
            <person name="Schobel S."/>
            <person name="Town C.D."/>
        </authorList>
    </citation>
    <scope>GENOME REANNOTATION</scope>
    <source>
        <strain>cv. Columbia</strain>
    </source>
</reference>
<reference key="4">
    <citation type="journal article" date="2002" name="Science">
        <title>Functional annotation of a full-length Arabidopsis cDNA collection.</title>
        <authorList>
            <person name="Seki M."/>
            <person name="Narusaka M."/>
            <person name="Kamiya A."/>
            <person name="Ishida J."/>
            <person name="Satou M."/>
            <person name="Sakurai T."/>
            <person name="Nakajima M."/>
            <person name="Enju A."/>
            <person name="Akiyama K."/>
            <person name="Oono Y."/>
            <person name="Muramatsu M."/>
            <person name="Hayashizaki Y."/>
            <person name="Kawai J."/>
            <person name="Carninci P."/>
            <person name="Itoh M."/>
            <person name="Ishii Y."/>
            <person name="Arakawa T."/>
            <person name="Shibata K."/>
            <person name="Shinagawa A."/>
            <person name="Shinozaki K."/>
        </authorList>
    </citation>
    <scope>NUCLEOTIDE SEQUENCE [LARGE SCALE MRNA] OF 408-493</scope>
    <source>
        <strain>cv. Columbia</strain>
    </source>
</reference>
<reference key="5">
    <citation type="journal article" date="2006" name="BMC Evol. Biol.">
        <title>The monosaccharide transporter gene family in land plants is ancient and shows differential subfamily expression and expansion across lineages.</title>
        <authorList>
            <person name="Johnson D.A."/>
            <person name="Hill J.P."/>
            <person name="Thomas M.A."/>
        </authorList>
    </citation>
    <scope>GENE FAMILY</scope>
</reference>
<accession>Q8GXR2</accession>
<accession>O23213</accession>
<proteinExistence type="evidence at transcript level"/>
<name>PLT6_ARATH</name>
<gene>
    <name type="primary">PLT6</name>
    <name type="ordered locus">At4g36670</name>
    <name type="ORF">AP22.86</name>
    <name type="ORF">C7A10.690</name>
</gene>
<feature type="chain" id="PRO_0000259874" description="Probable polyol transporter 6">
    <location>
        <begin position="1"/>
        <end position="493"/>
    </location>
</feature>
<feature type="transmembrane region" description="Helical; Name=1" evidence="2">
    <location>
        <begin position="25"/>
        <end position="45"/>
    </location>
</feature>
<feature type="transmembrane region" description="Helical; Name=2" evidence="2">
    <location>
        <begin position="54"/>
        <end position="74"/>
    </location>
</feature>
<feature type="transmembrane region" description="Helical; Name=3" evidence="2">
    <location>
        <begin position="85"/>
        <end position="105"/>
    </location>
</feature>
<feature type="transmembrane region" description="Helical; Name=4" evidence="2">
    <location>
        <begin position="116"/>
        <end position="136"/>
    </location>
</feature>
<feature type="transmembrane region" description="Helical; Name=5" evidence="2">
    <location>
        <begin position="142"/>
        <end position="162"/>
    </location>
</feature>
<feature type="transmembrane region" description="Helical; Name=6" evidence="2">
    <location>
        <begin position="177"/>
        <end position="197"/>
    </location>
</feature>
<feature type="transmembrane region" description="Helical; Name=7" evidence="2">
    <location>
        <begin position="275"/>
        <end position="295"/>
    </location>
</feature>
<feature type="transmembrane region" description="Helical; Name=8" evidence="2">
    <location>
        <begin position="313"/>
        <end position="333"/>
    </location>
</feature>
<feature type="transmembrane region" description="Helical; Name=9" evidence="2">
    <location>
        <begin position="343"/>
        <end position="363"/>
    </location>
</feature>
<feature type="transmembrane region" description="Helical; Name=10" evidence="2">
    <location>
        <begin position="372"/>
        <end position="392"/>
    </location>
</feature>
<feature type="transmembrane region" description="Helical; Name=11" evidence="2">
    <location>
        <begin position="414"/>
        <end position="434"/>
    </location>
</feature>
<feature type="transmembrane region" description="Helical; Name=12" evidence="2">
    <location>
        <begin position="444"/>
        <end position="464"/>
    </location>
</feature>